<dbReference type="EMBL" id="CU179680">
    <property type="protein sequence ID" value="CAL58893.1"/>
    <property type="molecule type" value="Genomic_DNA"/>
</dbReference>
<dbReference type="RefSeq" id="WP_011949374.1">
    <property type="nucleotide sequence ID" value="NC_009497.1"/>
</dbReference>
<dbReference type="SMR" id="A5IXY4"/>
<dbReference type="STRING" id="347257.MAG1950"/>
<dbReference type="GeneID" id="93357953"/>
<dbReference type="KEGG" id="maa:MAG1950"/>
<dbReference type="HOGENOM" id="CLU_160655_1_2_14"/>
<dbReference type="Proteomes" id="UP000007065">
    <property type="component" value="Chromosome"/>
</dbReference>
<dbReference type="GO" id="GO:1990904">
    <property type="term" value="C:ribonucleoprotein complex"/>
    <property type="evidence" value="ECO:0007669"/>
    <property type="project" value="UniProtKB-KW"/>
</dbReference>
<dbReference type="GO" id="GO:0005840">
    <property type="term" value="C:ribosome"/>
    <property type="evidence" value="ECO:0007669"/>
    <property type="project" value="UniProtKB-KW"/>
</dbReference>
<dbReference type="GO" id="GO:0019843">
    <property type="term" value="F:rRNA binding"/>
    <property type="evidence" value="ECO:0007669"/>
    <property type="project" value="UniProtKB-UniRule"/>
</dbReference>
<dbReference type="GO" id="GO:0003735">
    <property type="term" value="F:structural constituent of ribosome"/>
    <property type="evidence" value="ECO:0007669"/>
    <property type="project" value="InterPro"/>
</dbReference>
<dbReference type="GO" id="GO:0006412">
    <property type="term" value="P:translation"/>
    <property type="evidence" value="ECO:0007669"/>
    <property type="project" value="UniProtKB-UniRule"/>
</dbReference>
<dbReference type="Gene3D" id="1.20.58.110">
    <property type="entry name" value="Ribosomal protein S20"/>
    <property type="match status" value="1"/>
</dbReference>
<dbReference type="HAMAP" id="MF_00500">
    <property type="entry name" value="Ribosomal_bS20"/>
    <property type="match status" value="1"/>
</dbReference>
<dbReference type="InterPro" id="IPR002583">
    <property type="entry name" value="Ribosomal_bS20"/>
</dbReference>
<dbReference type="InterPro" id="IPR036510">
    <property type="entry name" value="Ribosomal_bS20_sf"/>
</dbReference>
<dbReference type="NCBIfam" id="TIGR00029">
    <property type="entry name" value="S20"/>
    <property type="match status" value="1"/>
</dbReference>
<dbReference type="Pfam" id="PF01649">
    <property type="entry name" value="Ribosomal_S20p"/>
    <property type="match status" value="1"/>
</dbReference>
<dbReference type="SUPFAM" id="SSF46992">
    <property type="entry name" value="Ribosomal protein S20"/>
    <property type="match status" value="1"/>
</dbReference>
<proteinExistence type="inferred from homology"/>
<keyword id="KW-1185">Reference proteome</keyword>
<keyword id="KW-0687">Ribonucleoprotein</keyword>
<keyword id="KW-0689">Ribosomal protein</keyword>
<keyword id="KW-0694">RNA-binding</keyword>
<keyword id="KW-0699">rRNA-binding</keyword>
<name>RS20_MYCAP</name>
<evidence type="ECO:0000255" key="1">
    <source>
        <dbReference type="HAMAP-Rule" id="MF_00500"/>
    </source>
</evidence>
<evidence type="ECO:0000256" key="2">
    <source>
        <dbReference type="SAM" id="MobiDB-lite"/>
    </source>
</evidence>
<evidence type="ECO:0000305" key="3"/>
<reference key="1">
    <citation type="journal article" date="2007" name="PLoS Genet.">
        <title>Being pathogenic, plastic, and sexual while living with a nearly minimal bacterial genome.</title>
        <authorList>
            <person name="Sirand-Pugnet P."/>
            <person name="Lartigue C."/>
            <person name="Marenda M."/>
            <person name="Jacob D."/>
            <person name="Barre A."/>
            <person name="Barbe V."/>
            <person name="Schenowitz C."/>
            <person name="Mangenot S."/>
            <person name="Couloux A."/>
            <person name="Segurens B."/>
            <person name="de Daruvar A."/>
            <person name="Blanchard A."/>
            <person name="Citti C."/>
        </authorList>
    </citation>
    <scope>NUCLEOTIDE SEQUENCE [LARGE SCALE GENOMIC DNA]</scope>
    <source>
        <strain>NCTC 10123 / CIP 59.7 / PG2</strain>
    </source>
</reference>
<accession>A5IXY4</accession>
<feature type="chain" id="PRO_1000126481" description="Small ribosomal subunit protein bS20">
    <location>
        <begin position="1"/>
        <end position="89"/>
    </location>
</feature>
<feature type="region of interest" description="Disordered" evidence="2">
    <location>
        <begin position="68"/>
        <end position="89"/>
    </location>
</feature>
<feature type="compositionally biased region" description="Basic and acidic residues" evidence="2">
    <location>
        <begin position="76"/>
        <end position="89"/>
    </location>
</feature>
<organism>
    <name type="scientific">Mycoplasmopsis agalactiae (strain NCTC 10123 / CIP 59.7 / PG2)</name>
    <name type="common">Mycoplasma agalactiae</name>
    <dbReference type="NCBI Taxonomy" id="347257"/>
    <lineage>
        <taxon>Bacteria</taxon>
        <taxon>Bacillati</taxon>
        <taxon>Mycoplasmatota</taxon>
        <taxon>Mycoplasmoidales</taxon>
        <taxon>Metamycoplasmataceae</taxon>
        <taxon>Mycoplasmopsis</taxon>
    </lineage>
</organism>
<comment type="function">
    <text evidence="1">Binds directly to 16S ribosomal RNA.</text>
</comment>
<comment type="similarity">
    <text evidence="1">Belongs to the bacterial ribosomal protein bS20 family.</text>
</comment>
<protein>
    <recommendedName>
        <fullName evidence="1">Small ribosomal subunit protein bS20</fullName>
    </recommendedName>
    <alternativeName>
        <fullName evidence="3">30S ribosomal protein S20</fullName>
    </alternativeName>
</protein>
<gene>
    <name evidence="1" type="primary">rpsT</name>
    <name type="ordered locus">MAG1950</name>
</gene>
<sequence length="89" mass="10179">MANIKSKVKSIAKQEEFRQRNNAMKTRVRKAIRAAREAVLAKEEGFEKKVFEAHSIIATAVQKGVYHPNKGARKSSRLDHFVNEQKSKQ</sequence>